<sequence>MTTPRFLPSSPPGQARSDLYTTLVSSSPDLPSINELVSRYAKKPKPLRSGSNAASIPTTATTTFTTAAKLLQSAQAEQADLVETLPPPRAKTKAKPKQKDPPEVVDLSPDLPVNIPEPQPERRKARKTANGVTKKKRGGGEESVADDATNEITTPTKNQPWKFFKSPSPRTTSDLEITGFQEVAATTAPVTTSTTDLTKGTASAQNKVTKSRVRKTSSAASRKKKAETVSRHFAVPDDVSTAPEPITVPDDAPEEQLFNLEPAVARRLDWTPPRETNTADLCPVSSNAKEVTSTLDGALSAAPAAVQNVFLTLQDKFAYPVEQVARRPDSPSKELGPPPEVIKKRKVIQLVGPSNDSKIPNQASPVKSKAPKKKPRTITDLATAAYTTEGKQSNAPAKKGTLTSYLEGQGEQVFQHCHPDSRLRKPERKRKPKGRGQVLLSPLSAIDQSARQDFVFGTSSQLAQEHSPTFLRDLHAALRQSNDFSDDPFASPIMAAPQGRKLWTAGARGEEGDLMNIEVIDLVDSPAFPDDPDAIVRAEMQKSPSRSEPKGIKNRRTPMVNLDSSEIDISEPHARDLESANSAEHTLKTQASKSTHFASTTPPRPTKITMVPACENTAEPPIVASDVDSDNEPPPSNQQAYQMPPPPRPVVPEETAIPRPNFEVMTDTQLSKQVSSYGFKSVKKRSAMIALLNQCWESKAGATGAAGQSSAFATTSRTSAPRGPRGKTSTAAAAAKSPTKRPVGRPRKNSVGASGDVTVVEATTPVKRPRGRPKKNAKAEASPDMMQNIAASMPPTVAAAVKTPRRRKKAATQPAVEILDSDGEAGLSPSPSLSPEPVFSSPEKDSVDVSIGEHTTMSLAVTPTAQQAELFTRITRAVKSAPRSTDPDKPSWHEKMLMYDPIVLEDLAAWLNSGQLDRVGYDGEVAPADVKMWCESKSICCLWRMSYRGRERKRL</sequence>
<gene>
    <name evidence="1" type="primary">SLX4</name>
    <name type="ORF">MGG_16183</name>
</gene>
<comment type="function">
    <text evidence="1">Regulatory subunit of the SLX1-SLX4 structure-specific endonuclease that resolves DNA secondary structures generated during DNA repair and recombination. Has endonuclease activity towards branched DNA substrates, introducing single-strand cuts in duplex DNA close to junctions with ss-DNA.</text>
</comment>
<comment type="subunit">
    <text evidence="1">Forms a heterodimer with SLX1.</text>
</comment>
<comment type="subcellular location">
    <subcellularLocation>
        <location evidence="1">Nucleus</location>
    </subcellularLocation>
</comment>
<comment type="PTM">
    <text evidence="1">Phosphorylated in response to DNA damage.</text>
</comment>
<comment type="similarity">
    <text evidence="1">Belongs to the SLX4 family.</text>
</comment>
<organism>
    <name type="scientific">Pyricularia oryzae (strain 70-15 / ATCC MYA-4617 / FGSC 8958)</name>
    <name type="common">Rice blast fungus</name>
    <name type="synonym">Magnaporthe oryzae</name>
    <dbReference type="NCBI Taxonomy" id="242507"/>
    <lineage>
        <taxon>Eukaryota</taxon>
        <taxon>Fungi</taxon>
        <taxon>Dikarya</taxon>
        <taxon>Ascomycota</taxon>
        <taxon>Pezizomycotina</taxon>
        <taxon>Sordariomycetes</taxon>
        <taxon>Sordariomycetidae</taxon>
        <taxon>Magnaporthales</taxon>
        <taxon>Pyriculariaceae</taxon>
        <taxon>Pyricularia</taxon>
    </lineage>
</organism>
<name>SLX4_PYRO7</name>
<proteinExistence type="inferred from homology"/>
<dbReference type="EMBL" id="CM001231">
    <property type="protein sequence ID" value="EHA56942.1"/>
    <property type="molecule type" value="Genomic_DNA"/>
</dbReference>
<dbReference type="RefSeq" id="XP_003709554.1">
    <property type="nucleotide sequence ID" value="XM_003709506.1"/>
</dbReference>
<dbReference type="SMR" id="A4R1T1"/>
<dbReference type="STRING" id="242507.A4R1T1"/>
<dbReference type="EnsemblFungi" id="MGG_16183T0">
    <property type="protein sequence ID" value="MGG_16183T0"/>
    <property type="gene ID" value="MGG_16183"/>
</dbReference>
<dbReference type="GeneID" id="12984549"/>
<dbReference type="KEGG" id="mgr:MGG_16183"/>
<dbReference type="VEuPathDB" id="FungiDB:MGG_16183"/>
<dbReference type="eggNOG" id="ENOG502SEB3">
    <property type="taxonomic scope" value="Eukaryota"/>
</dbReference>
<dbReference type="HOGENOM" id="CLU_005957_0_0_1"/>
<dbReference type="InParanoid" id="A4R1T1"/>
<dbReference type="OMA" id="SICCLWK"/>
<dbReference type="OrthoDB" id="5349119at2759"/>
<dbReference type="Proteomes" id="UP000009058">
    <property type="component" value="Chromosome 1"/>
</dbReference>
<dbReference type="GO" id="GO:0033557">
    <property type="term" value="C:Slx1-Slx4 complex"/>
    <property type="evidence" value="ECO:0007669"/>
    <property type="project" value="UniProtKB-UniRule"/>
</dbReference>
<dbReference type="GO" id="GO:0017108">
    <property type="term" value="F:5'-flap endonuclease activity"/>
    <property type="evidence" value="ECO:0007669"/>
    <property type="project" value="InterPro"/>
</dbReference>
<dbReference type="GO" id="GO:0003677">
    <property type="term" value="F:DNA binding"/>
    <property type="evidence" value="ECO:0007669"/>
    <property type="project" value="InterPro"/>
</dbReference>
<dbReference type="GO" id="GO:0006310">
    <property type="term" value="P:DNA recombination"/>
    <property type="evidence" value="ECO:0007669"/>
    <property type="project" value="UniProtKB-UniRule"/>
</dbReference>
<dbReference type="GO" id="GO:0006281">
    <property type="term" value="P:DNA repair"/>
    <property type="evidence" value="ECO:0007669"/>
    <property type="project" value="UniProtKB-UniRule"/>
</dbReference>
<dbReference type="GO" id="GO:0006260">
    <property type="term" value="P:DNA replication"/>
    <property type="evidence" value="ECO:0007669"/>
    <property type="project" value="InterPro"/>
</dbReference>
<dbReference type="GO" id="GO:0006355">
    <property type="term" value="P:regulation of DNA-templated transcription"/>
    <property type="evidence" value="ECO:0007669"/>
    <property type="project" value="InterPro"/>
</dbReference>
<dbReference type="CDD" id="cd22999">
    <property type="entry name" value="SAP_SLX4"/>
    <property type="match status" value="1"/>
</dbReference>
<dbReference type="HAMAP" id="MF_03110">
    <property type="entry name" value="Endonuc_su_Slx4"/>
    <property type="match status" value="1"/>
</dbReference>
<dbReference type="InterPro" id="IPR017956">
    <property type="entry name" value="AT_hook_DNA-bd_motif"/>
</dbReference>
<dbReference type="InterPro" id="IPR000637">
    <property type="entry name" value="HMGI/Y_DNA-bd_CS"/>
</dbReference>
<dbReference type="InterPro" id="IPR027784">
    <property type="entry name" value="Slx4_ascomycetes"/>
</dbReference>
<dbReference type="InterPro" id="IPR018574">
    <property type="entry name" value="Structure-sp_endonuc_su_Slx4"/>
</dbReference>
<dbReference type="Pfam" id="PF09494">
    <property type="entry name" value="Slx4"/>
    <property type="match status" value="1"/>
</dbReference>
<dbReference type="SMART" id="SM00384">
    <property type="entry name" value="AT_hook"/>
    <property type="match status" value="2"/>
</dbReference>
<evidence type="ECO:0000255" key="1">
    <source>
        <dbReference type="HAMAP-Rule" id="MF_03110"/>
    </source>
</evidence>
<evidence type="ECO:0000256" key="2">
    <source>
        <dbReference type="SAM" id="MobiDB-lite"/>
    </source>
</evidence>
<feature type="chain" id="PRO_0000388031" description="Structure-specific endonuclease subunit SLX4">
    <location>
        <begin position="1"/>
        <end position="955"/>
    </location>
</feature>
<feature type="region of interest" description="Disordered" evidence="2">
    <location>
        <begin position="75"/>
        <end position="173"/>
    </location>
</feature>
<feature type="region of interest" description="Disordered" evidence="2">
    <location>
        <begin position="189"/>
        <end position="231"/>
    </location>
</feature>
<feature type="region of interest" description="Disordered" evidence="2">
    <location>
        <begin position="352"/>
        <end position="376"/>
    </location>
</feature>
<feature type="region of interest" description="Disordered" evidence="2">
    <location>
        <begin position="539"/>
        <end position="608"/>
    </location>
</feature>
<feature type="region of interest" description="Disordered" evidence="2">
    <location>
        <begin position="621"/>
        <end position="648"/>
    </location>
</feature>
<feature type="region of interest" description="Disordered" evidence="2">
    <location>
        <begin position="705"/>
        <end position="784"/>
    </location>
</feature>
<feature type="region of interest" description="Disordered" evidence="2">
    <location>
        <begin position="819"/>
        <end position="846"/>
    </location>
</feature>
<feature type="compositionally biased region" description="Basic residues" evidence="2">
    <location>
        <begin position="123"/>
        <end position="137"/>
    </location>
</feature>
<feature type="compositionally biased region" description="Polar residues" evidence="2">
    <location>
        <begin position="150"/>
        <end position="159"/>
    </location>
</feature>
<feature type="compositionally biased region" description="Low complexity" evidence="2">
    <location>
        <begin position="189"/>
        <end position="198"/>
    </location>
</feature>
<feature type="compositionally biased region" description="Basic residues" evidence="2">
    <location>
        <begin position="209"/>
        <end position="225"/>
    </location>
</feature>
<feature type="compositionally biased region" description="Polar residues" evidence="2">
    <location>
        <begin position="352"/>
        <end position="362"/>
    </location>
</feature>
<feature type="compositionally biased region" description="Basic and acidic residues" evidence="2">
    <location>
        <begin position="539"/>
        <end position="551"/>
    </location>
</feature>
<feature type="compositionally biased region" description="Polar residues" evidence="2">
    <location>
        <begin position="579"/>
        <end position="601"/>
    </location>
</feature>
<feature type="compositionally biased region" description="Low complexity" evidence="2">
    <location>
        <begin position="705"/>
        <end position="720"/>
    </location>
</feature>
<feature type="compositionally biased region" description="Low complexity" evidence="2">
    <location>
        <begin position="727"/>
        <end position="737"/>
    </location>
</feature>
<feature type="compositionally biased region" description="Basic residues" evidence="2">
    <location>
        <begin position="738"/>
        <end position="748"/>
    </location>
</feature>
<feature type="compositionally biased region" description="Basic residues" evidence="2">
    <location>
        <begin position="767"/>
        <end position="776"/>
    </location>
</feature>
<feature type="compositionally biased region" description="Low complexity" evidence="2">
    <location>
        <begin position="828"/>
        <end position="841"/>
    </location>
</feature>
<keyword id="KW-0227">DNA damage</keyword>
<keyword id="KW-0233">DNA recombination</keyword>
<keyword id="KW-0234">DNA repair</keyword>
<keyword id="KW-0539">Nucleus</keyword>
<keyword id="KW-0597">Phosphoprotein</keyword>
<keyword id="KW-1185">Reference proteome</keyword>
<reference key="1">
    <citation type="journal article" date="2005" name="Nature">
        <title>The genome sequence of the rice blast fungus Magnaporthe grisea.</title>
        <authorList>
            <person name="Dean R.A."/>
            <person name="Talbot N.J."/>
            <person name="Ebbole D.J."/>
            <person name="Farman M.L."/>
            <person name="Mitchell T.K."/>
            <person name="Orbach M.J."/>
            <person name="Thon M.R."/>
            <person name="Kulkarni R."/>
            <person name="Xu J.-R."/>
            <person name="Pan H."/>
            <person name="Read N.D."/>
            <person name="Lee Y.-H."/>
            <person name="Carbone I."/>
            <person name="Brown D."/>
            <person name="Oh Y.Y."/>
            <person name="Donofrio N."/>
            <person name="Jeong J.S."/>
            <person name="Soanes D.M."/>
            <person name="Djonovic S."/>
            <person name="Kolomiets E."/>
            <person name="Rehmeyer C."/>
            <person name="Li W."/>
            <person name="Harding M."/>
            <person name="Kim S."/>
            <person name="Lebrun M.-H."/>
            <person name="Bohnert H."/>
            <person name="Coughlan S."/>
            <person name="Butler J."/>
            <person name="Calvo S.E."/>
            <person name="Ma L.-J."/>
            <person name="Nicol R."/>
            <person name="Purcell S."/>
            <person name="Nusbaum C."/>
            <person name="Galagan J.E."/>
            <person name="Birren B.W."/>
        </authorList>
    </citation>
    <scope>NUCLEOTIDE SEQUENCE [LARGE SCALE GENOMIC DNA]</scope>
    <source>
        <strain>70-15 / ATCC MYA-4617 / FGSC 8958</strain>
    </source>
</reference>
<protein>
    <recommendedName>
        <fullName evidence="1">Structure-specific endonuclease subunit SLX4</fullName>
    </recommendedName>
</protein>
<accession>A4R1T1</accession>
<accession>G4MMG4</accession>